<dbReference type="EMBL" id="U63014">
    <property type="protein sequence ID" value="AAB51458.1"/>
    <property type="molecule type" value="mRNA"/>
</dbReference>
<dbReference type="SMR" id="P93538"/>
<dbReference type="GO" id="GO:0030246">
    <property type="term" value="F:carbohydrate binding"/>
    <property type="evidence" value="ECO:0007669"/>
    <property type="project" value="UniProtKB-KW"/>
</dbReference>
<dbReference type="GO" id="GO:0046872">
    <property type="term" value="F:metal ion binding"/>
    <property type="evidence" value="ECO:0007669"/>
    <property type="project" value="UniProtKB-KW"/>
</dbReference>
<dbReference type="CDD" id="cd06899">
    <property type="entry name" value="lectin_legume_LecRK_Arcelin_ConA"/>
    <property type="match status" value="1"/>
</dbReference>
<dbReference type="Gene3D" id="2.60.120.200">
    <property type="match status" value="1"/>
</dbReference>
<dbReference type="InterPro" id="IPR013320">
    <property type="entry name" value="ConA-like_dom_sf"/>
</dbReference>
<dbReference type="InterPro" id="IPR016363">
    <property type="entry name" value="L-lectin"/>
</dbReference>
<dbReference type="InterPro" id="IPR000985">
    <property type="entry name" value="Lectin_LegA_CS"/>
</dbReference>
<dbReference type="InterPro" id="IPR019825">
    <property type="entry name" value="Lectin_legB_Mn/Ca_BS"/>
</dbReference>
<dbReference type="InterPro" id="IPR001220">
    <property type="entry name" value="Legume_lectin_dom"/>
</dbReference>
<dbReference type="InterPro" id="IPR050258">
    <property type="entry name" value="Leguminous_Lectin"/>
</dbReference>
<dbReference type="PANTHER" id="PTHR32401">
    <property type="entry name" value="CONCANAVALIN A-LIKE LECTIN FAMILY PROTEIN"/>
    <property type="match status" value="1"/>
</dbReference>
<dbReference type="PANTHER" id="PTHR32401:SF45">
    <property type="entry name" value="LECTIN"/>
    <property type="match status" value="1"/>
</dbReference>
<dbReference type="Pfam" id="PF00139">
    <property type="entry name" value="Lectin_legB"/>
    <property type="match status" value="1"/>
</dbReference>
<dbReference type="PIRSF" id="PIRSF002690">
    <property type="entry name" value="L-type_lectin_plant"/>
    <property type="match status" value="1"/>
</dbReference>
<dbReference type="SUPFAM" id="SSF49899">
    <property type="entry name" value="Concanavalin A-like lectins/glucanases"/>
    <property type="match status" value="1"/>
</dbReference>
<dbReference type="PROSITE" id="PS00308">
    <property type="entry name" value="LECTIN_LEGUME_ALPHA"/>
    <property type="match status" value="1"/>
</dbReference>
<dbReference type="PROSITE" id="PS00307">
    <property type="entry name" value="LECTIN_LEGUME_BETA"/>
    <property type="match status" value="1"/>
</dbReference>
<evidence type="ECO:0000250" key="1"/>
<evidence type="ECO:0000255" key="2"/>
<evidence type="ECO:0000305" key="3"/>
<keyword id="KW-0106">Calcium</keyword>
<keyword id="KW-0325">Glycoprotein</keyword>
<keyword id="KW-0430">Lectin</keyword>
<keyword id="KW-0464">Manganese</keyword>
<keyword id="KW-0479">Metal-binding</keyword>
<keyword id="KW-0732">Signal</keyword>
<sequence>ISITFFLLLLNKVNSAEILSFSFPKFVSNQEDLLLQGDALVSSEGELQLTTVENGVPVWNSTGRALYYAPVHIWDNSTGRVASFATSFSFVVKAPVASKSADGIAFFLAPLNNQIHGAGGGLYGLFNSSSYSSSYQIVAVEFDTHTNAWDPNTRHIGIDVNSVKSTKTVTWGWENGEVANVLITYQAATEMLTVSLTYPSNQTSYILSAAVDLKSILPEWVRVGFTATTGLTTQYVETNDVLSWSFTSTLETSDCGAEDNNVHLASYAFI</sequence>
<protein>
    <recommendedName>
        <fullName>Bark lectin</fullName>
    </recommendedName>
    <alternativeName>
        <fullName>LECSJABG</fullName>
    </alternativeName>
</protein>
<feature type="signal peptide" evidence="2">
    <location>
        <begin position="1" status="less than"/>
        <end position="15"/>
    </location>
</feature>
<feature type="chain" id="PRO_0000017654" description="Bark lectin">
    <location>
        <begin position="16"/>
        <end position="270"/>
    </location>
</feature>
<feature type="binding site" evidence="1">
    <location>
        <position position="141"/>
    </location>
    <ligand>
        <name>Mn(2+)</name>
        <dbReference type="ChEBI" id="CHEBI:29035"/>
    </ligand>
</feature>
<feature type="binding site" evidence="1">
    <location>
        <position position="143"/>
    </location>
    <ligand>
        <name>Ca(2+)</name>
        <dbReference type="ChEBI" id="CHEBI:29108"/>
    </ligand>
</feature>
<feature type="binding site" evidence="1">
    <location>
        <position position="143"/>
    </location>
    <ligand>
        <name>Mn(2+)</name>
        <dbReference type="ChEBI" id="CHEBI:29035"/>
    </ligand>
</feature>
<feature type="binding site" evidence="1">
    <location>
        <position position="145"/>
    </location>
    <ligand>
        <name>Ca(2+)</name>
        <dbReference type="ChEBI" id="CHEBI:29108"/>
    </ligand>
</feature>
<feature type="binding site" evidence="1">
    <location>
        <position position="147"/>
    </location>
    <ligand>
        <name>Ca(2+)</name>
        <dbReference type="ChEBI" id="CHEBI:29108"/>
    </ligand>
</feature>
<feature type="binding site" evidence="1">
    <location>
        <position position="150"/>
    </location>
    <ligand>
        <name>Ca(2+)</name>
        <dbReference type="ChEBI" id="CHEBI:29108"/>
    </ligand>
</feature>
<feature type="binding site" evidence="1">
    <location>
        <position position="150"/>
    </location>
    <ligand>
        <name>Mn(2+)</name>
        <dbReference type="ChEBI" id="CHEBI:29035"/>
    </ligand>
</feature>
<feature type="binding site" evidence="1">
    <location>
        <position position="155"/>
    </location>
    <ligand>
        <name>Mn(2+)</name>
        <dbReference type="ChEBI" id="CHEBI:29035"/>
    </ligand>
</feature>
<feature type="glycosylation site" description="N-linked (GlcNAc...) asparagine" evidence="2">
    <location>
        <position position="60"/>
    </location>
</feature>
<feature type="glycosylation site" description="N-linked (GlcNAc...) asparagine" evidence="2">
    <location>
        <position position="76"/>
    </location>
</feature>
<feature type="glycosylation site" description="N-linked (GlcNAc...) asparagine" evidence="2">
    <location>
        <position position="127"/>
    </location>
</feature>
<feature type="glycosylation site" description="N-linked (GlcNAc...) asparagine" evidence="2">
    <location>
        <position position="201"/>
    </location>
</feature>
<feature type="non-terminal residue">
    <location>
        <position position="1"/>
    </location>
</feature>
<accession>P93538</accession>
<organism>
    <name type="scientific">Styphnolobium japonicum</name>
    <name type="common">Japanese pagoda tree</name>
    <name type="synonym">Sophora japonica</name>
    <dbReference type="NCBI Taxonomy" id="3897"/>
    <lineage>
        <taxon>Eukaryota</taxon>
        <taxon>Viridiplantae</taxon>
        <taxon>Streptophyta</taxon>
        <taxon>Embryophyta</taxon>
        <taxon>Tracheophyta</taxon>
        <taxon>Spermatophyta</taxon>
        <taxon>Magnoliopsida</taxon>
        <taxon>eudicotyledons</taxon>
        <taxon>Gunneridae</taxon>
        <taxon>Pentapetalae</taxon>
        <taxon>rosids</taxon>
        <taxon>fabids</taxon>
        <taxon>Fabales</taxon>
        <taxon>Fabaceae</taxon>
        <taxon>Papilionoideae</taxon>
        <taxon>Cladrastis clade</taxon>
        <taxon>Styphnolobium</taxon>
    </lineage>
</organism>
<name>LECB_STYJP</name>
<reference key="1">
    <citation type="journal article" date="1997" name="Plant Mol. Biol.">
        <title>Molecular cloning of the bark and seed lectins from the Japanese pagoda tree (Sophora japonica).</title>
        <authorList>
            <person name="van Damme E.J."/>
            <person name="Barre A."/>
            <person name="Rouge P."/>
            <person name="Peumans W.J."/>
        </authorList>
    </citation>
    <scope>NUCLEOTIDE SEQUENCE [MRNA]</scope>
    <source>
        <tissue>Bark</tissue>
    </source>
</reference>
<comment type="function">
    <text>GalNAc-specific lectin.</text>
</comment>
<comment type="similarity">
    <text evidence="3">Belongs to the leguminous lectin family.</text>
</comment>
<proteinExistence type="evidence at transcript level"/>